<name>VPB23_MYCTU</name>
<protein>
    <recommendedName>
        <fullName>Putative antitoxin VapB23</fullName>
    </recommendedName>
</protein>
<proteinExistence type="predicted"/>
<organism>
    <name type="scientific">Mycobacterium tuberculosis (strain ATCC 25618 / H37Rv)</name>
    <dbReference type="NCBI Taxonomy" id="83332"/>
    <lineage>
        <taxon>Bacteria</taxon>
        <taxon>Bacillati</taxon>
        <taxon>Actinomycetota</taxon>
        <taxon>Actinomycetes</taxon>
        <taxon>Mycobacteriales</taxon>
        <taxon>Mycobacteriaceae</taxon>
        <taxon>Mycobacterium</taxon>
        <taxon>Mycobacterium tuberculosis complex</taxon>
    </lineage>
</organism>
<sequence length="82" mass="9533">MLSDEEREAFRQQAAAQQMSLSNWLRQAGLRQLEAQRQRPLRTAQELREFFASRPDETGAEPDWQAHLQVMAESRRRGLPAP</sequence>
<dbReference type="EMBL" id="AL123456">
    <property type="protein sequence ID" value="CCP45664.1"/>
    <property type="molecule type" value="Genomic_DNA"/>
</dbReference>
<dbReference type="RefSeq" id="WP_003913411.1">
    <property type="nucleotide sequence ID" value="NZ_NVQJ01000006.1"/>
</dbReference>
<dbReference type="RefSeq" id="YP_007411570.1">
    <property type="nucleotide sequence ID" value="NC_000962.3"/>
</dbReference>
<dbReference type="SMR" id="P0CW32"/>
<dbReference type="STRING" id="83332.Rv2862A"/>
<dbReference type="PaxDb" id="83332-Rv2862A"/>
<dbReference type="GeneID" id="14515870"/>
<dbReference type="KEGG" id="mtu:Rv2862A"/>
<dbReference type="KEGG" id="mtv:RVBD_2862A"/>
<dbReference type="PATRIC" id="fig|83332.111.peg.3184"/>
<dbReference type="TubercuList" id="Rv2862A"/>
<dbReference type="InParanoid" id="P0CW32"/>
<dbReference type="OrthoDB" id="4747757at2"/>
<dbReference type="Proteomes" id="UP000001584">
    <property type="component" value="Chromosome"/>
</dbReference>
<evidence type="ECO:0000305" key="1">
    <source>
    </source>
</evidence>
<feature type="chain" id="PRO_0000408068" description="Putative antitoxin VapB23">
    <location>
        <begin position="1"/>
        <end position="82"/>
    </location>
</feature>
<comment type="function">
    <text evidence="1">Putative antitoxin component of a possible type II toxin-antitoxin (TA) system. The cognate toxin is VapC23.</text>
</comment>
<accession>P0CW32</accession>
<accession>L0TCG7</accession>
<keyword id="KW-1185">Reference proteome</keyword>
<keyword id="KW-1277">Toxin-antitoxin system</keyword>
<reference key="1">
    <citation type="journal article" date="1998" name="Nature">
        <title>Deciphering the biology of Mycobacterium tuberculosis from the complete genome sequence.</title>
        <authorList>
            <person name="Cole S.T."/>
            <person name="Brosch R."/>
            <person name="Parkhill J."/>
            <person name="Garnier T."/>
            <person name="Churcher C.M."/>
            <person name="Harris D.E."/>
            <person name="Gordon S.V."/>
            <person name="Eiglmeier K."/>
            <person name="Gas S."/>
            <person name="Barry C.E. III"/>
            <person name="Tekaia F."/>
            <person name="Badcock K."/>
            <person name="Basham D."/>
            <person name="Brown D."/>
            <person name="Chillingworth T."/>
            <person name="Connor R."/>
            <person name="Davies R.M."/>
            <person name="Devlin K."/>
            <person name="Feltwell T."/>
            <person name="Gentles S."/>
            <person name="Hamlin N."/>
            <person name="Holroyd S."/>
            <person name="Hornsby T."/>
            <person name="Jagels K."/>
            <person name="Krogh A."/>
            <person name="McLean J."/>
            <person name="Moule S."/>
            <person name="Murphy L.D."/>
            <person name="Oliver S."/>
            <person name="Osborne J."/>
            <person name="Quail M.A."/>
            <person name="Rajandream M.A."/>
            <person name="Rogers J."/>
            <person name="Rutter S."/>
            <person name="Seeger K."/>
            <person name="Skelton S."/>
            <person name="Squares S."/>
            <person name="Squares R."/>
            <person name="Sulston J.E."/>
            <person name="Taylor K."/>
            <person name="Whitehead S."/>
            <person name="Barrell B.G."/>
        </authorList>
    </citation>
    <scope>NUCLEOTIDE SEQUENCE [LARGE SCALE GENOMIC DNA]</scope>
    <source>
        <strain>ATCC 25618 / H37Rv</strain>
    </source>
</reference>
<reference key="2">
    <citation type="journal article" date="2005" name="Nucleic Acids Res.">
        <title>Toxin-antitoxin loci are highly abundant in free-living but lost from host-associated prokaryotes.</title>
        <authorList>
            <person name="Pandey D.P."/>
            <person name="Gerdes K."/>
        </authorList>
    </citation>
    <scope>IDENTIFICATION</scope>
    <scope>POSSIBLE FUNCTION</scope>
    <source>
        <strain>ATCC 25618 / H37Rv</strain>
    </source>
</reference>
<gene>
    <name type="primary">vapB23</name>
    <name type="ordered locus">Rv2862A</name>
</gene>